<feature type="chain" id="PRO_1000077456" description="Protease HtpX homolog">
    <location>
        <begin position="1"/>
        <end position="285"/>
    </location>
</feature>
<feature type="transmembrane region" description="Helical" evidence="1">
    <location>
        <begin position="7"/>
        <end position="27"/>
    </location>
</feature>
<feature type="transmembrane region" description="Helical" evidence="1">
    <location>
        <begin position="30"/>
        <end position="50"/>
    </location>
</feature>
<feature type="transmembrane region" description="Helical" evidence="1">
    <location>
        <begin position="146"/>
        <end position="166"/>
    </location>
</feature>
<feature type="transmembrane region" description="Helical" evidence="1">
    <location>
        <begin position="177"/>
        <end position="197"/>
    </location>
</feature>
<feature type="active site" evidence="1">
    <location>
        <position position="132"/>
    </location>
</feature>
<feature type="binding site" evidence="1">
    <location>
        <position position="131"/>
    </location>
    <ligand>
        <name>Zn(2+)</name>
        <dbReference type="ChEBI" id="CHEBI:29105"/>
        <note>catalytic</note>
    </ligand>
</feature>
<feature type="binding site" evidence="1">
    <location>
        <position position="135"/>
    </location>
    <ligand>
        <name>Zn(2+)</name>
        <dbReference type="ChEBI" id="CHEBI:29105"/>
        <note>catalytic</note>
    </ligand>
</feature>
<feature type="binding site" evidence="1">
    <location>
        <position position="202"/>
    </location>
    <ligand>
        <name>Zn(2+)</name>
        <dbReference type="ChEBI" id="CHEBI:29105"/>
        <note>catalytic</note>
    </ligand>
</feature>
<protein>
    <recommendedName>
        <fullName evidence="1">Protease HtpX homolog</fullName>
        <ecNumber evidence="1">3.4.24.-</ecNumber>
    </recommendedName>
</protein>
<comment type="cofactor">
    <cofactor evidence="1">
        <name>Zn(2+)</name>
        <dbReference type="ChEBI" id="CHEBI:29105"/>
    </cofactor>
    <text evidence="1">Binds 1 zinc ion per subunit.</text>
</comment>
<comment type="subcellular location">
    <subcellularLocation>
        <location evidence="1">Cell inner membrane</location>
        <topology evidence="1">Multi-pass membrane protein</topology>
    </subcellularLocation>
</comment>
<comment type="similarity">
    <text evidence="1">Belongs to the peptidase M48B family.</text>
</comment>
<proteinExistence type="inferred from homology"/>
<dbReference type="EC" id="3.4.24.-" evidence="1"/>
<dbReference type="EMBL" id="CP000124">
    <property type="protein sequence ID" value="ABA47921.1"/>
    <property type="molecule type" value="Genomic_DNA"/>
</dbReference>
<dbReference type="RefSeq" id="WP_004189409.1">
    <property type="nucleotide sequence ID" value="NC_007434.1"/>
</dbReference>
<dbReference type="EnsemblBacteria" id="ABA47921">
    <property type="protein sequence ID" value="ABA47921"/>
    <property type="gene ID" value="BURPS1710b_0349"/>
</dbReference>
<dbReference type="GeneID" id="93058627"/>
<dbReference type="KEGG" id="bpm:BURPS1710b_0349"/>
<dbReference type="HOGENOM" id="CLU_042266_3_0_4"/>
<dbReference type="Proteomes" id="UP000002700">
    <property type="component" value="Chromosome I"/>
</dbReference>
<dbReference type="GO" id="GO:0005886">
    <property type="term" value="C:plasma membrane"/>
    <property type="evidence" value="ECO:0007669"/>
    <property type="project" value="UniProtKB-SubCell"/>
</dbReference>
<dbReference type="GO" id="GO:0004222">
    <property type="term" value="F:metalloendopeptidase activity"/>
    <property type="evidence" value="ECO:0007669"/>
    <property type="project" value="UniProtKB-UniRule"/>
</dbReference>
<dbReference type="GO" id="GO:0008270">
    <property type="term" value="F:zinc ion binding"/>
    <property type="evidence" value="ECO:0007669"/>
    <property type="project" value="UniProtKB-UniRule"/>
</dbReference>
<dbReference type="GO" id="GO:0006508">
    <property type="term" value="P:proteolysis"/>
    <property type="evidence" value="ECO:0007669"/>
    <property type="project" value="UniProtKB-KW"/>
</dbReference>
<dbReference type="CDD" id="cd07336">
    <property type="entry name" value="M48B_HtpX_like"/>
    <property type="match status" value="1"/>
</dbReference>
<dbReference type="Gene3D" id="3.30.2010.10">
    <property type="entry name" value="Metalloproteases ('zincins'), catalytic domain"/>
    <property type="match status" value="1"/>
</dbReference>
<dbReference type="HAMAP" id="MF_00188">
    <property type="entry name" value="Pept_M48_protease_HtpX"/>
    <property type="match status" value="1"/>
</dbReference>
<dbReference type="InterPro" id="IPR050083">
    <property type="entry name" value="HtpX_protease"/>
</dbReference>
<dbReference type="InterPro" id="IPR022919">
    <property type="entry name" value="Pept_M48_protease_HtpX"/>
</dbReference>
<dbReference type="InterPro" id="IPR001915">
    <property type="entry name" value="Peptidase_M48"/>
</dbReference>
<dbReference type="NCBIfam" id="NF002363">
    <property type="entry name" value="PRK01345.1"/>
    <property type="match status" value="1"/>
</dbReference>
<dbReference type="NCBIfam" id="NF002826">
    <property type="entry name" value="PRK03001.1"/>
    <property type="match status" value="1"/>
</dbReference>
<dbReference type="PANTHER" id="PTHR43221">
    <property type="entry name" value="PROTEASE HTPX"/>
    <property type="match status" value="1"/>
</dbReference>
<dbReference type="PANTHER" id="PTHR43221:SF1">
    <property type="entry name" value="PROTEASE HTPX"/>
    <property type="match status" value="1"/>
</dbReference>
<dbReference type="Pfam" id="PF01435">
    <property type="entry name" value="Peptidase_M48"/>
    <property type="match status" value="1"/>
</dbReference>
<name>HTPX_BURP1</name>
<organism>
    <name type="scientific">Burkholderia pseudomallei (strain 1710b)</name>
    <dbReference type="NCBI Taxonomy" id="320372"/>
    <lineage>
        <taxon>Bacteria</taxon>
        <taxon>Pseudomonadati</taxon>
        <taxon>Pseudomonadota</taxon>
        <taxon>Betaproteobacteria</taxon>
        <taxon>Burkholderiales</taxon>
        <taxon>Burkholderiaceae</taxon>
        <taxon>Burkholderia</taxon>
        <taxon>pseudomallei group</taxon>
    </lineage>
</organism>
<reference key="1">
    <citation type="journal article" date="2010" name="Genome Biol. Evol.">
        <title>Continuing evolution of Burkholderia mallei through genome reduction and large-scale rearrangements.</title>
        <authorList>
            <person name="Losada L."/>
            <person name="Ronning C.M."/>
            <person name="DeShazer D."/>
            <person name="Woods D."/>
            <person name="Fedorova N."/>
            <person name="Kim H.S."/>
            <person name="Shabalina S.A."/>
            <person name="Pearson T.R."/>
            <person name="Brinkac L."/>
            <person name="Tan P."/>
            <person name="Nandi T."/>
            <person name="Crabtree J."/>
            <person name="Badger J."/>
            <person name="Beckstrom-Sternberg S."/>
            <person name="Saqib M."/>
            <person name="Schutzer S.E."/>
            <person name="Keim P."/>
            <person name="Nierman W.C."/>
        </authorList>
    </citation>
    <scope>NUCLEOTIDE SEQUENCE [LARGE SCALE GENOMIC DNA]</scope>
    <source>
        <strain>1710b</strain>
    </source>
</reference>
<evidence type="ECO:0000255" key="1">
    <source>
        <dbReference type="HAMAP-Rule" id="MF_00188"/>
    </source>
</evidence>
<sequence length="285" mass="30929">MFNWVKTAMLMAAITALFIVIGGMIGGSRGMTIALLIALGMNFFSYWFSDKMVLRMYNAQEVDEATAPQFYRMVRELATRANLPMPRVYLIDENQPNAFATGRNPEHAAVAATTGILRVLSEREMRGVMAHELAHVKHRDILISTISATMAGAISALANFAMFFGGRDENGRPANPIAGIAVALLAPIAGALIQMAISRAREFEADRGGAQISGDPQALASALDKIHRYASGIPFQTAEEHPATAQMMIMNPLSGGGLQNLFSTHPATEERIARLMDMARTGRFD</sequence>
<gene>
    <name evidence="1" type="primary">htpX</name>
    <name type="ordered locus">BURPS1710b_0349</name>
</gene>
<accession>Q3JXD9</accession>
<keyword id="KW-0997">Cell inner membrane</keyword>
<keyword id="KW-1003">Cell membrane</keyword>
<keyword id="KW-0378">Hydrolase</keyword>
<keyword id="KW-0472">Membrane</keyword>
<keyword id="KW-0479">Metal-binding</keyword>
<keyword id="KW-0482">Metalloprotease</keyword>
<keyword id="KW-0645">Protease</keyword>
<keyword id="KW-0812">Transmembrane</keyword>
<keyword id="KW-1133">Transmembrane helix</keyword>
<keyword id="KW-0862">Zinc</keyword>